<organism>
    <name type="scientific">Pyrococcus horikoshii (strain ATCC 700860 / DSM 12428 / JCM 9974 / NBRC 100139 / OT-3)</name>
    <dbReference type="NCBI Taxonomy" id="70601"/>
    <lineage>
        <taxon>Archaea</taxon>
        <taxon>Methanobacteriati</taxon>
        <taxon>Methanobacteriota</taxon>
        <taxon>Thermococci</taxon>
        <taxon>Thermococcales</taxon>
        <taxon>Thermococcaceae</taxon>
        <taxon>Pyrococcus</taxon>
    </lineage>
</organism>
<accession>O57803</accession>
<reference key="1">
    <citation type="journal article" date="1998" name="DNA Res.">
        <title>Complete sequence and gene organization of the genome of a hyper-thermophilic archaebacterium, Pyrococcus horikoshii OT3.</title>
        <authorList>
            <person name="Kawarabayasi Y."/>
            <person name="Sawada M."/>
            <person name="Horikawa H."/>
            <person name="Haikawa Y."/>
            <person name="Hino Y."/>
            <person name="Yamamoto S."/>
            <person name="Sekine M."/>
            <person name="Baba S."/>
            <person name="Kosugi H."/>
            <person name="Hosoyama A."/>
            <person name="Nagai Y."/>
            <person name="Sakai M."/>
            <person name="Ogura K."/>
            <person name="Otsuka R."/>
            <person name="Nakazawa H."/>
            <person name="Takamiya M."/>
            <person name="Ohfuku Y."/>
            <person name="Funahashi T."/>
            <person name="Tanaka T."/>
            <person name="Kudoh Y."/>
            <person name="Yamazaki J."/>
            <person name="Kushida N."/>
            <person name="Oguchi A."/>
            <person name="Aoki K."/>
            <person name="Yoshizawa T."/>
            <person name="Nakamura Y."/>
            <person name="Robb F.T."/>
            <person name="Horikoshi K."/>
            <person name="Masuchi Y."/>
            <person name="Shizuya H."/>
            <person name="Kikuchi H."/>
        </authorList>
    </citation>
    <scope>NUCLEOTIDE SEQUENCE [LARGE SCALE GENOMIC DNA]</scope>
    <source>
        <strain>ATCC 700860 / DSM 12428 / JCM 9974 / NBRC 100139 / OT-3</strain>
    </source>
</reference>
<sequence length="199" mass="22929">MMAAKKRVTAAKDKWKLKQWYIIYAPDFFGGVEVGLTPADDPEKVMNRVVEVTLKDITGDFTKGHVKLYFQVYDVKGQNAYTKFKGMKLARSYIRSLVRRRTTRIDGIFNITTKDGYRLRVMAMAIAMRRIQTSQERAIRKIMQEIIYKKAEELNFKDFVLEAVNGKIAAEIAKEGKKIYPLKKAEIRKIKVLGEPEAA</sequence>
<dbReference type="EMBL" id="BA000001">
    <property type="protein sequence ID" value="BAA29128.1"/>
    <property type="molecule type" value="Genomic_DNA"/>
</dbReference>
<dbReference type="PIR" id="A71225">
    <property type="entry name" value="A71225"/>
</dbReference>
<dbReference type="RefSeq" id="WP_010884176.1">
    <property type="nucleotide sequence ID" value="NC_000961.1"/>
</dbReference>
<dbReference type="SMR" id="O57803"/>
<dbReference type="STRING" id="70601.gene:9376967"/>
<dbReference type="EnsemblBacteria" id="BAA29128">
    <property type="protein sequence ID" value="BAA29128"/>
    <property type="gene ID" value="BAA29128"/>
</dbReference>
<dbReference type="GeneID" id="1443958"/>
<dbReference type="KEGG" id="pho:PH0060"/>
<dbReference type="eggNOG" id="arCOG04186">
    <property type="taxonomic scope" value="Archaea"/>
</dbReference>
<dbReference type="OrthoDB" id="30639at2157"/>
<dbReference type="Proteomes" id="UP000000752">
    <property type="component" value="Chromosome"/>
</dbReference>
<dbReference type="GO" id="GO:1990904">
    <property type="term" value="C:ribonucleoprotein complex"/>
    <property type="evidence" value="ECO:0007669"/>
    <property type="project" value="UniProtKB-KW"/>
</dbReference>
<dbReference type="GO" id="GO:0005840">
    <property type="term" value="C:ribosome"/>
    <property type="evidence" value="ECO:0007669"/>
    <property type="project" value="UniProtKB-KW"/>
</dbReference>
<dbReference type="GO" id="GO:0003735">
    <property type="term" value="F:structural constituent of ribosome"/>
    <property type="evidence" value="ECO:0007669"/>
    <property type="project" value="InterPro"/>
</dbReference>
<dbReference type="GO" id="GO:0006412">
    <property type="term" value="P:translation"/>
    <property type="evidence" value="ECO:0007669"/>
    <property type="project" value="UniProtKB-UniRule"/>
</dbReference>
<dbReference type="HAMAP" id="MF_00359">
    <property type="entry name" value="Ribosomal_eS1"/>
    <property type="match status" value="1"/>
</dbReference>
<dbReference type="InterPro" id="IPR001593">
    <property type="entry name" value="Ribosomal_eS1"/>
</dbReference>
<dbReference type="InterPro" id="IPR030838">
    <property type="entry name" value="Ribosomal_eS1_arc"/>
</dbReference>
<dbReference type="InterPro" id="IPR018281">
    <property type="entry name" value="Ribosomal_eS1_CS"/>
</dbReference>
<dbReference type="NCBIfam" id="NF003142">
    <property type="entry name" value="PRK04057.1"/>
    <property type="match status" value="1"/>
</dbReference>
<dbReference type="PANTHER" id="PTHR11830">
    <property type="entry name" value="40S RIBOSOMAL PROTEIN S3A"/>
    <property type="match status" value="1"/>
</dbReference>
<dbReference type="Pfam" id="PF01015">
    <property type="entry name" value="Ribosomal_S3Ae"/>
    <property type="match status" value="1"/>
</dbReference>
<dbReference type="SMART" id="SM01397">
    <property type="entry name" value="Ribosomal_S3Ae"/>
    <property type="match status" value="1"/>
</dbReference>
<dbReference type="PROSITE" id="PS01191">
    <property type="entry name" value="RIBOSOMAL_S3AE"/>
    <property type="match status" value="1"/>
</dbReference>
<comment type="similarity">
    <text evidence="1">Belongs to the eukaryotic ribosomal protein eS1 family.</text>
</comment>
<name>RS3A_PYRHO</name>
<protein>
    <recommendedName>
        <fullName evidence="1">Small ribosomal subunit protein eS1</fullName>
    </recommendedName>
    <alternativeName>
        <fullName evidence="2">30S ribosomal protein S3Ae</fullName>
    </alternativeName>
    <alternativeName>
        <fullName evidence="1">Ribosomal protein S1e</fullName>
    </alternativeName>
</protein>
<keyword id="KW-0687">Ribonucleoprotein</keyword>
<keyword id="KW-0689">Ribosomal protein</keyword>
<proteinExistence type="inferred from homology"/>
<evidence type="ECO:0000255" key="1">
    <source>
        <dbReference type="HAMAP-Rule" id="MF_00359"/>
    </source>
</evidence>
<evidence type="ECO:0000305" key="2"/>
<gene>
    <name evidence="1" type="primary">rps3ae</name>
    <name type="ordered locus">PH0060</name>
</gene>
<feature type="chain" id="PRO_0000153558" description="Small ribosomal subunit protein eS1">
    <location>
        <begin position="1"/>
        <end position="199"/>
    </location>
</feature>